<proteinExistence type="evidence at transcript level"/>
<accession>Q9VL00</accession>
<protein>
    <recommendedName>
        <fullName>Ubiquitin thioesterase otubain-like</fullName>
        <ecNumber evidence="3">3.4.19.12</ecNumber>
    </recommendedName>
    <alternativeName>
        <fullName>Ubiquitin-specific-processing protease otubain-like</fullName>
        <shortName>Deubiquitinating enzyme otubain-like</shortName>
    </alternativeName>
</protein>
<sequence>MEPFTHNDGNRDELIIQQKRDIEKEISDTTPLVSEQLPLTCLYAEYSGDEIFTAKIQDLSKKYKFIRRTRPDGNCFFRAFAYSYLEYLISNTSAYQEFKKLAEESKEKLVQLGFPSFTLEDFHETFMEVIQRVSPDNAGGHSTVQDELHKIFNEQGYSDYVVVYLRLITSGKLQEEADFYQNFIEGDLTIEAFRHLEVEPMYKESDHIHIIALCTALGAGVRVEYLDRGEGGTVKAHDFPEGSEPRIYLIYRPGHYDILYPN</sequence>
<dbReference type="EC" id="3.4.19.12" evidence="3"/>
<dbReference type="EMBL" id="AE014134">
    <property type="protein sequence ID" value="AAF52905.1"/>
    <property type="molecule type" value="Genomic_DNA"/>
</dbReference>
<dbReference type="EMBL" id="AY061382">
    <property type="protein sequence ID" value="AAL28930.1"/>
    <property type="molecule type" value="mRNA"/>
</dbReference>
<dbReference type="RefSeq" id="NP_609375.1">
    <property type="nucleotide sequence ID" value="NM_135531.3"/>
</dbReference>
<dbReference type="SMR" id="Q9VL00"/>
<dbReference type="BioGRID" id="60470">
    <property type="interactions" value="4"/>
</dbReference>
<dbReference type="FunCoup" id="Q9VL00">
    <property type="interactions" value="2771"/>
</dbReference>
<dbReference type="IntAct" id="Q9VL00">
    <property type="interactions" value="3"/>
</dbReference>
<dbReference type="STRING" id="7227.FBpp0079577"/>
<dbReference type="MEROPS" id="C65.001"/>
<dbReference type="PaxDb" id="7227-FBpp0079577"/>
<dbReference type="DNASU" id="34384"/>
<dbReference type="EnsemblMetazoa" id="FBtr0079987">
    <property type="protein sequence ID" value="FBpp0079577"/>
    <property type="gene ID" value="FBgn0032214"/>
</dbReference>
<dbReference type="GeneID" id="34384"/>
<dbReference type="KEGG" id="dme:Dmel_CG4968"/>
<dbReference type="UCSC" id="CG4968-RA">
    <property type="organism name" value="d. melanogaster"/>
</dbReference>
<dbReference type="AGR" id="FB:FBgn0032214"/>
<dbReference type="FlyBase" id="FBgn0032214">
    <property type="gene designation" value="CG4968"/>
</dbReference>
<dbReference type="VEuPathDB" id="VectorBase:FBgn0032214"/>
<dbReference type="eggNOG" id="KOG3991">
    <property type="taxonomic scope" value="Eukaryota"/>
</dbReference>
<dbReference type="GeneTree" id="ENSGT00390000006979"/>
<dbReference type="HOGENOM" id="CLU_014832_3_0_1"/>
<dbReference type="InParanoid" id="Q9VL00"/>
<dbReference type="OMA" id="ADHVQIT"/>
<dbReference type="OrthoDB" id="18915at2759"/>
<dbReference type="PhylomeDB" id="Q9VL00"/>
<dbReference type="Reactome" id="R-DME-5689880">
    <property type="pathway name" value="Ub-specific processing proteases"/>
</dbReference>
<dbReference type="Reactome" id="R-DME-5689896">
    <property type="pathway name" value="Ovarian tumor domain proteases"/>
</dbReference>
<dbReference type="BioGRID-ORCS" id="34384">
    <property type="hits" value="0 hits in 3 CRISPR screens"/>
</dbReference>
<dbReference type="GenomeRNAi" id="34384"/>
<dbReference type="PRO" id="PR:Q9VL00"/>
<dbReference type="Proteomes" id="UP000000803">
    <property type="component" value="Chromosome 2L"/>
</dbReference>
<dbReference type="Bgee" id="FBgn0032214">
    <property type="expression patterns" value="Expressed in early elongation stage spermatid (Drosophila) in testis and 136 other cell types or tissues"/>
</dbReference>
<dbReference type="GO" id="GO:0004843">
    <property type="term" value="F:cysteine-type deubiquitinase activity"/>
    <property type="evidence" value="ECO:0000250"/>
    <property type="project" value="FlyBase"/>
</dbReference>
<dbReference type="GO" id="GO:1990380">
    <property type="term" value="F:K48-linked deubiquitinase activity"/>
    <property type="evidence" value="ECO:0000314"/>
    <property type="project" value="FlyBase"/>
</dbReference>
<dbReference type="GO" id="GO:0043130">
    <property type="term" value="F:ubiquitin binding"/>
    <property type="evidence" value="ECO:0000318"/>
    <property type="project" value="GO_Central"/>
</dbReference>
<dbReference type="GO" id="GO:0061059">
    <property type="term" value="P:positive regulation of peptidoglycan recognition protein signaling pathway"/>
    <property type="evidence" value="ECO:0000315"/>
    <property type="project" value="FlyBase"/>
</dbReference>
<dbReference type="GO" id="GO:0016579">
    <property type="term" value="P:protein deubiquitination"/>
    <property type="evidence" value="ECO:0007669"/>
    <property type="project" value="InterPro"/>
</dbReference>
<dbReference type="GO" id="GO:0006508">
    <property type="term" value="P:proteolysis"/>
    <property type="evidence" value="ECO:0007669"/>
    <property type="project" value="UniProtKB-KW"/>
</dbReference>
<dbReference type="CDD" id="cd22763">
    <property type="entry name" value="OTUB1"/>
    <property type="match status" value="1"/>
</dbReference>
<dbReference type="FunFam" id="1.20.1300.20:FF:000001">
    <property type="entry name" value="Ubiquitin thioesterase OTUB1"/>
    <property type="match status" value="1"/>
</dbReference>
<dbReference type="Gene3D" id="3.30.200.60">
    <property type="entry name" value="Peptidase C65 Otubain, subdomain 1"/>
    <property type="match status" value="1"/>
</dbReference>
<dbReference type="Gene3D" id="1.20.1300.20">
    <property type="entry name" value="Peptidase C65 Otubain, subdomain 2"/>
    <property type="match status" value="1"/>
</dbReference>
<dbReference type="InterPro" id="IPR003323">
    <property type="entry name" value="OTU_dom"/>
</dbReference>
<dbReference type="InterPro" id="IPR016615">
    <property type="entry name" value="Otubain"/>
</dbReference>
<dbReference type="InterPro" id="IPR038765">
    <property type="entry name" value="Papain-like_cys_pep_sf"/>
</dbReference>
<dbReference type="InterPro" id="IPR019400">
    <property type="entry name" value="Peptidase_C65_otubain"/>
</dbReference>
<dbReference type="InterPro" id="IPR042468">
    <property type="entry name" value="Peptidase_C65_otubain_sub1"/>
</dbReference>
<dbReference type="InterPro" id="IPR042467">
    <property type="entry name" value="Peptidase_C65_otubain_sub2"/>
</dbReference>
<dbReference type="PANTHER" id="PTHR12931:SF15">
    <property type="entry name" value="UBIQUITIN THIOESTERASE OTUBAIN-LIKE"/>
    <property type="match status" value="1"/>
</dbReference>
<dbReference type="PANTHER" id="PTHR12931">
    <property type="entry name" value="UBIQUITIN THIOLESTERASE PROTEIN OTUB"/>
    <property type="match status" value="1"/>
</dbReference>
<dbReference type="Pfam" id="PF10275">
    <property type="entry name" value="Peptidase_C65"/>
    <property type="match status" value="1"/>
</dbReference>
<dbReference type="PIRSF" id="PIRSF013503">
    <property type="entry name" value="Ubiquitin_thioesterase_Otubain"/>
    <property type="match status" value="1"/>
</dbReference>
<dbReference type="SUPFAM" id="SSF54001">
    <property type="entry name" value="Cysteine proteinases"/>
    <property type="match status" value="1"/>
</dbReference>
<dbReference type="PROSITE" id="PS50802">
    <property type="entry name" value="OTU"/>
    <property type="match status" value="1"/>
</dbReference>
<keyword id="KW-0378">Hydrolase</keyword>
<keyword id="KW-0645">Protease</keyword>
<keyword id="KW-1185">Reference proteome</keyword>
<keyword id="KW-0788">Thiol protease</keyword>
<keyword id="KW-0833">Ubl conjugation pathway</keyword>
<comment type="function">
    <text evidence="1">Possible hydrolase that can remove conjugated ubiquitin from proteins in vitro and may therefore play an important regulatory role at the level of protein turnover by preventing degradation.</text>
</comment>
<comment type="catalytic activity">
    <reaction evidence="3">
        <text>Thiol-dependent hydrolysis of ester, thioester, amide, peptide and isopeptide bonds formed by the C-terminal Gly of ubiquitin (a 76-residue protein attached to proteins as an intracellular targeting signal).</text>
        <dbReference type="EC" id="3.4.19.12"/>
    </reaction>
</comment>
<comment type="similarity">
    <text evidence="5">Belongs to the peptidase C65 family.</text>
</comment>
<name>OTUBL_DROME</name>
<gene>
    <name type="ORF">CG4968</name>
</gene>
<organism>
    <name type="scientific">Drosophila melanogaster</name>
    <name type="common">Fruit fly</name>
    <dbReference type="NCBI Taxonomy" id="7227"/>
    <lineage>
        <taxon>Eukaryota</taxon>
        <taxon>Metazoa</taxon>
        <taxon>Ecdysozoa</taxon>
        <taxon>Arthropoda</taxon>
        <taxon>Hexapoda</taxon>
        <taxon>Insecta</taxon>
        <taxon>Pterygota</taxon>
        <taxon>Neoptera</taxon>
        <taxon>Endopterygota</taxon>
        <taxon>Diptera</taxon>
        <taxon>Brachycera</taxon>
        <taxon>Muscomorpha</taxon>
        <taxon>Ephydroidea</taxon>
        <taxon>Drosophilidae</taxon>
        <taxon>Drosophila</taxon>
        <taxon>Sophophora</taxon>
    </lineage>
</organism>
<reference key="1">
    <citation type="journal article" date="2000" name="Science">
        <title>The genome sequence of Drosophila melanogaster.</title>
        <authorList>
            <person name="Adams M.D."/>
            <person name="Celniker S.E."/>
            <person name="Holt R.A."/>
            <person name="Evans C.A."/>
            <person name="Gocayne J.D."/>
            <person name="Amanatides P.G."/>
            <person name="Scherer S.E."/>
            <person name="Li P.W."/>
            <person name="Hoskins R.A."/>
            <person name="Galle R.F."/>
            <person name="George R.A."/>
            <person name="Lewis S.E."/>
            <person name="Richards S."/>
            <person name="Ashburner M."/>
            <person name="Henderson S.N."/>
            <person name="Sutton G.G."/>
            <person name="Wortman J.R."/>
            <person name="Yandell M.D."/>
            <person name="Zhang Q."/>
            <person name="Chen L.X."/>
            <person name="Brandon R.C."/>
            <person name="Rogers Y.-H.C."/>
            <person name="Blazej R.G."/>
            <person name="Champe M."/>
            <person name="Pfeiffer B.D."/>
            <person name="Wan K.H."/>
            <person name="Doyle C."/>
            <person name="Baxter E.G."/>
            <person name="Helt G."/>
            <person name="Nelson C.R."/>
            <person name="Miklos G.L.G."/>
            <person name="Abril J.F."/>
            <person name="Agbayani A."/>
            <person name="An H.-J."/>
            <person name="Andrews-Pfannkoch C."/>
            <person name="Baldwin D."/>
            <person name="Ballew R.M."/>
            <person name="Basu A."/>
            <person name="Baxendale J."/>
            <person name="Bayraktaroglu L."/>
            <person name="Beasley E.M."/>
            <person name="Beeson K.Y."/>
            <person name="Benos P.V."/>
            <person name="Berman B.P."/>
            <person name="Bhandari D."/>
            <person name="Bolshakov S."/>
            <person name="Borkova D."/>
            <person name="Botchan M.R."/>
            <person name="Bouck J."/>
            <person name="Brokstein P."/>
            <person name="Brottier P."/>
            <person name="Burtis K.C."/>
            <person name="Busam D.A."/>
            <person name="Butler H."/>
            <person name="Cadieu E."/>
            <person name="Center A."/>
            <person name="Chandra I."/>
            <person name="Cherry J.M."/>
            <person name="Cawley S."/>
            <person name="Dahlke C."/>
            <person name="Davenport L.B."/>
            <person name="Davies P."/>
            <person name="de Pablos B."/>
            <person name="Delcher A."/>
            <person name="Deng Z."/>
            <person name="Mays A.D."/>
            <person name="Dew I."/>
            <person name="Dietz S.M."/>
            <person name="Dodson K."/>
            <person name="Doup L.E."/>
            <person name="Downes M."/>
            <person name="Dugan-Rocha S."/>
            <person name="Dunkov B.C."/>
            <person name="Dunn P."/>
            <person name="Durbin K.J."/>
            <person name="Evangelista C.C."/>
            <person name="Ferraz C."/>
            <person name="Ferriera S."/>
            <person name="Fleischmann W."/>
            <person name="Fosler C."/>
            <person name="Gabrielian A.E."/>
            <person name="Garg N.S."/>
            <person name="Gelbart W.M."/>
            <person name="Glasser K."/>
            <person name="Glodek A."/>
            <person name="Gong F."/>
            <person name="Gorrell J.H."/>
            <person name="Gu Z."/>
            <person name="Guan P."/>
            <person name="Harris M."/>
            <person name="Harris N.L."/>
            <person name="Harvey D.A."/>
            <person name="Heiman T.J."/>
            <person name="Hernandez J.R."/>
            <person name="Houck J."/>
            <person name="Hostin D."/>
            <person name="Houston K.A."/>
            <person name="Howland T.J."/>
            <person name="Wei M.-H."/>
            <person name="Ibegwam C."/>
            <person name="Jalali M."/>
            <person name="Kalush F."/>
            <person name="Karpen G.H."/>
            <person name="Ke Z."/>
            <person name="Kennison J.A."/>
            <person name="Ketchum K.A."/>
            <person name="Kimmel B.E."/>
            <person name="Kodira C.D."/>
            <person name="Kraft C.L."/>
            <person name="Kravitz S."/>
            <person name="Kulp D."/>
            <person name="Lai Z."/>
            <person name="Lasko P."/>
            <person name="Lei Y."/>
            <person name="Levitsky A.A."/>
            <person name="Li J.H."/>
            <person name="Li Z."/>
            <person name="Liang Y."/>
            <person name="Lin X."/>
            <person name="Liu X."/>
            <person name="Mattei B."/>
            <person name="McIntosh T.C."/>
            <person name="McLeod M.P."/>
            <person name="McPherson D."/>
            <person name="Merkulov G."/>
            <person name="Milshina N.V."/>
            <person name="Mobarry C."/>
            <person name="Morris J."/>
            <person name="Moshrefi A."/>
            <person name="Mount S.M."/>
            <person name="Moy M."/>
            <person name="Murphy B."/>
            <person name="Murphy L."/>
            <person name="Muzny D.M."/>
            <person name="Nelson D.L."/>
            <person name="Nelson D.R."/>
            <person name="Nelson K.A."/>
            <person name="Nixon K."/>
            <person name="Nusskern D.R."/>
            <person name="Pacleb J.M."/>
            <person name="Palazzolo M."/>
            <person name="Pittman G.S."/>
            <person name="Pan S."/>
            <person name="Pollard J."/>
            <person name="Puri V."/>
            <person name="Reese M.G."/>
            <person name="Reinert K."/>
            <person name="Remington K."/>
            <person name="Saunders R.D.C."/>
            <person name="Scheeler F."/>
            <person name="Shen H."/>
            <person name="Shue B.C."/>
            <person name="Siden-Kiamos I."/>
            <person name="Simpson M."/>
            <person name="Skupski M.P."/>
            <person name="Smith T.J."/>
            <person name="Spier E."/>
            <person name="Spradling A.C."/>
            <person name="Stapleton M."/>
            <person name="Strong R."/>
            <person name="Sun E."/>
            <person name="Svirskas R."/>
            <person name="Tector C."/>
            <person name="Turner R."/>
            <person name="Venter E."/>
            <person name="Wang A.H."/>
            <person name="Wang X."/>
            <person name="Wang Z.-Y."/>
            <person name="Wassarman D.A."/>
            <person name="Weinstock G.M."/>
            <person name="Weissenbach J."/>
            <person name="Williams S.M."/>
            <person name="Woodage T."/>
            <person name="Worley K.C."/>
            <person name="Wu D."/>
            <person name="Yang S."/>
            <person name="Yao Q.A."/>
            <person name="Ye J."/>
            <person name="Yeh R.-F."/>
            <person name="Zaveri J.S."/>
            <person name="Zhan M."/>
            <person name="Zhang G."/>
            <person name="Zhao Q."/>
            <person name="Zheng L."/>
            <person name="Zheng X.H."/>
            <person name="Zhong F.N."/>
            <person name="Zhong W."/>
            <person name="Zhou X."/>
            <person name="Zhu S.C."/>
            <person name="Zhu X."/>
            <person name="Smith H.O."/>
            <person name="Gibbs R.A."/>
            <person name="Myers E.W."/>
            <person name="Rubin G.M."/>
            <person name="Venter J.C."/>
        </authorList>
    </citation>
    <scope>NUCLEOTIDE SEQUENCE [LARGE SCALE GENOMIC DNA]</scope>
    <source>
        <strain>Berkeley</strain>
    </source>
</reference>
<reference key="2">
    <citation type="journal article" date="2002" name="Genome Biol.">
        <title>Annotation of the Drosophila melanogaster euchromatic genome: a systematic review.</title>
        <authorList>
            <person name="Misra S."/>
            <person name="Crosby M.A."/>
            <person name="Mungall C.J."/>
            <person name="Matthews B.B."/>
            <person name="Campbell K.S."/>
            <person name="Hradecky P."/>
            <person name="Huang Y."/>
            <person name="Kaminker J.S."/>
            <person name="Millburn G.H."/>
            <person name="Prochnik S.E."/>
            <person name="Smith C.D."/>
            <person name="Tupy J.L."/>
            <person name="Whitfield E.J."/>
            <person name="Bayraktaroglu L."/>
            <person name="Berman B.P."/>
            <person name="Bettencourt B.R."/>
            <person name="Celniker S.E."/>
            <person name="de Grey A.D.N.J."/>
            <person name="Drysdale R.A."/>
            <person name="Harris N.L."/>
            <person name="Richter J."/>
            <person name="Russo S."/>
            <person name="Schroeder A.J."/>
            <person name="Shu S.Q."/>
            <person name="Stapleton M."/>
            <person name="Yamada C."/>
            <person name="Ashburner M."/>
            <person name="Gelbart W.M."/>
            <person name="Rubin G.M."/>
            <person name="Lewis S.E."/>
        </authorList>
    </citation>
    <scope>GENOME REANNOTATION</scope>
    <source>
        <strain>Berkeley</strain>
    </source>
</reference>
<reference key="3">
    <citation type="journal article" date="2002" name="Genome Biol.">
        <title>A Drosophila full-length cDNA resource.</title>
        <authorList>
            <person name="Stapleton M."/>
            <person name="Carlson J.W."/>
            <person name="Brokstein P."/>
            <person name="Yu C."/>
            <person name="Champe M."/>
            <person name="George R.A."/>
            <person name="Guarin H."/>
            <person name="Kronmiller B."/>
            <person name="Pacleb J.M."/>
            <person name="Park S."/>
            <person name="Wan K.H."/>
            <person name="Rubin G.M."/>
            <person name="Celniker S.E."/>
        </authorList>
    </citation>
    <scope>NUCLEOTIDE SEQUENCE [LARGE SCALE MRNA]</scope>
    <source>
        <strain>Berkeley</strain>
        <tissue>Embryo</tissue>
    </source>
</reference>
<feature type="chain" id="PRO_0000221012" description="Ubiquitin thioesterase otubain-like">
    <location>
        <begin position="1"/>
        <end position="262"/>
    </location>
</feature>
<feature type="domain" description="OTU" evidence="4">
    <location>
        <begin position="64"/>
        <end position="262"/>
    </location>
</feature>
<feature type="active site" evidence="3">
    <location>
        <position position="72"/>
    </location>
</feature>
<feature type="active site" description="Nucleophile" evidence="3">
    <location>
        <position position="75"/>
    </location>
</feature>
<feature type="active site" evidence="3">
    <location>
        <position position="255"/>
    </location>
</feature>
<feature type="binding site" evidence="2">
    <location>
        <position position="168"/>
    </location>
    <ligand>
        <name>substrate</name>
    </ligand>
</feature>
<evidence type="ECO:0000250" key="1"/>
<evidence type="ECO:0000250" key="2">
    <source>
        <dbReference type="UniProtKB" id="Q5VVQ6"/>
    </source>
</evidence>
<evidence type="ECO:0000250" key="3">
    <source>
        <dbReference type="UniProtKB" id="Q96DC9"/>
    </source>
</evidence>
<evidence type="ECO:0000255" key="4">
    <source>
        <dbReference type="PROSITE-ProRule" id="PRU00139"/>
    </source>
</evidence>
<evidence type="ECO:0000305" key="5"/>